<evidence type="ECO:0000250" key="1"/>
<evidence type="ECO:0000250" key="2">
    <source>
        <dbReference type="UniProtKB" id="B3FIS6"/>
    </source>
</evidence>
<evidence type="ECO:0000255" key="3"/>
<evidence type="ECO:0000269" key="4">
    <source>
    </source>
</evidence>
<evidence type="ECO:0000305" key="5"/>
<keyword id="KW-0903">Direct protein sequencing</keyword>
<keyword id="KW-1015">Disulfide bond</keyword>
<keyword id="KW-0872">Ion channel impairing toxin</keyword>
<keyword id="KW-0960">Knottin</keyword>
<keyword id="KW-0964">Secreted</keyword>
<keyword id="KW-0732">Signal</keyword>
<keyword id="KW-0800">Toxin</keyword>
<dbReference type="EMBL" id="GU293103">
    <property type="protein sequence ID" value="ADB56919.1"/>
    <property type="molecule type" value="Genomic_DNA"/>
</dbReference>
<dbReference type="SMR" id="D2Y2M6"/>
<dbReference type="ArachnoServer" id="AS001657">
    <property type="toxin name" value="U3-theraphotoxin-Hhn1a"/>
</dbReference>
<dbReference type="GO" id="GO:0005576">
    <property type="term" value="C:extracellular region"/>
    <property type="evidence" value="ECO:0007669"/>
    <property type="project" value="UniProtKB-SubCell"/>
</dbReference>
<dbReference type="GO" id="GO:0008200">
    <property type="term" value="F:ion channel inhibitor activity"/>
    <property type="evidence" value="ECO:0007669"/>
    <property type="project" value="InterPro"/>
</dbReference>
<dbReference type="GO" id="GO:0090729">
    <property type="term" value="F:toxin activity"/>
    <property type="evidence" value="ECO:0007669"/>
    <property type="project" value="UniProtKB-KW"/>
</dbReference>
<dbReference type="InterPro" id="IPR011696">
    <property type="entry name" value="Huwentoxin-1"/>
</dbReference>
<dbReference type="InterPro" id="IPR013140">
    <property type="entry name" value="Huwentoxin_CS1"/>
</dbReference>
<dbReference type="Pfam" id="PF07740">
    <property type="entry name" value="Toxin_12"/>
    <property type="match status" value="1"/>
</dbReference>
<dbReference type="SUPFAM" id="SSF57059">
    <property type="entry name" value="omega toxin-like"/>
    <property type="match status" value="1"/>
</dbReference>
<dbReference type="PROSITE" id="PS60021">
    <property type="entry name" value="HWTX_1"/>
    <property type="match status" value="1"/>
</dbReference>
<protein>
    <recommendedName>
        <fullName>U3-theraphotoxin-Hhn1a 15</fullName>
        <shortName>U3-TRTX-Hhn1a</shortName>
    </recommendedName>
    <alternativeName>
        <fullName>Hainantoxin-VIII.15</fullName>
        <shortName>HNTX-VIII.15</shortName>
    </alternativeName>
    <alternativeName>
        <fullName>Peptide F4-27.90</fullName>
    </alternativeName>
</protein>
<comment type="function">
    <text evidence="1">Ion channel inhibitor.</text>
</comment>
<comment type="subcellular location">
    <subcellularLocation>
        <location>Secreted</location>
    </subcellularLocation>
</comment>
<comment type="tissue specificity">
    <text>Expressed by the venom gland.</text>
</comment>
<comment type="domain">
    <text evidence="1">The presence of a 'disulfide through disulfide knot' structurally defines this protein as a knottin.</text>
</comment>
<comment type="similarity">
    <text evidence="5">Belongs to the neurotoxin 10 (Hwtx-1) family. 51 (Hntx-8) subfamily. Hntx-8 sub-subfamily.</text>
</comment>
<sequence>MVNMKASMFLTFAGLVLLLVVCYASESEEKEFPKEMLSSIFAVDNDFKQEERDCAGYMRECKEKLCCSGYVCSSRWKWCVLPAPWRR</sequence>
<organism>
    <name type="scientific">Cyriopagopus hainanus</name>
    <name type="common">Chinese bird spider</name>
    <name type="synonym">Haplopelma hainanum</name>
    <dbReference type="NCBI Taxonomy" id="209901"/>
    <lineage>
        <taxon>Eukaryota</taxon>
        <taxon>Metazoa</taxon>
        <taxon>Ecdysozoa</taxon>
        <taxon>Arthropoda</taxon>
        <taxon>Chelicerata</taxon>
        <taxon>Arachnida</taxon>
        <taxon>Araneae</taxon>
        <taxon>Mygalomorphae</taxon>
        <taxon>Theraphosidae</taxon>
        <taxon>Haplopelma</taxon>
    </lineage>
</organism>
<proteinExistence type="evidence at protein level"/>
<feature type="signal peptide" evidence="3">
    <location>
        <begin position="1"/>
        <end position="24"/>
    </location>
</feature>
<feature type="propeptide" id="PRO_0000400607" evidence="4">
    <location>
        <begin position="25"/>
        <end position="52"/>
    </location>
</feature>
<feature type="peptide" id="PRO_0000400608" description="U3-theraphotoxin-Hhn1a 15">
    <location>
        <begin position="53"/>
        <end position="87"/>
    </location>
</feature>
<feature type="disulfide bond" evidence="2">
    <location>
        <begin position="54"/>
        <end position="67"/>
    </location>
</feature>
<feature type="disulfide bond" evidence="2">
    <location>
        <begin position="61"/>
        <end position="72"/>
    </location>
</feature>
<feature type="disulfide bond" evidence="2">
    <location>
        <begin position="66"/>
        <end position="79"/>
    </location>
</feature>
<reference key="1">
    <citation type="journal article" date="2010" name="J. Proteome Res.">
        <title>Molecular diversification of peptide toxins from the tarantula Haplopelma hainanum (Ornithoctonus hainana) venom based on transcriptomic, peptidomic, and genomic analyses.</title>
        <authorList>
            <person name="Tang X."/>
            <person name="Zhang Y."/>
            <person name="Hu W."/>
            <person name="Xu D."/>
            <person name="Tao H."/>
            <person name="Yang X."/>
            <person name="Li Y."/>
            <person name="Jiang L."/>
            <person name="Liang S."/>
        </authorList>
    </citation>
    <scope>NUCLEOTIDE SEQUENCE [LARGE SCALE GENOMIC DNA]</scope>
    <scope>PROTEIN SEQUENCE OF 53-85</scope>
    <scope>IDENTIFICATION BY MASS SPECTROMETRY</scope>
    <source>
        <tissue>Venom</tissue>
        <tissue>Venom gland</tissue>
    </source>
</reference>
<name>H8A15_CYRHA</name>
<accession>D2Y2M6</accession>